<reference key="1">
    <citation type="submission" date="2001-08" db="EMBL/GenBank/DDBJ databases">
        <authorList>
            <person name="Bayley D.P."/>
            <person name="Thomas N."/>
            <person name="Jarrell K.F."/>
        </authorList>
    </citation>
    <scope>NUCLEOTIDE SEQUENCE [GENOMIC DNA]</scope>
    <source>
        <strain>ATCC 33273 / DSM 1537 / NBRC 100457 / OCM 70 / PS</strain>
    </source>
</reference>
<gene>
    <name type="primary">flaD</name>
</gene>
<comment type="subcellular location">
    <subcellularLocation>
        <location evidence="1">Archaeal flagellum</location>
    </subcellularLocation>
</comment>
<comment type="similarity">
    <text evidence="1">To M.jannaschii FlaD, also to FlaE.</text>
</comment>
<accession>O06637</accession>
<sequence length="362" mass="41995">MIGKVDMDYASLEEEYMTESEMEDYLDELRHKIPSFIVELLKNNLKNRNLTRNQLNKIVNRVSDLYFGKKPEDKKAAELTNKINDLSHKLDALMKVATVSSATKVSDDIKKEIDNLDELDLAVESPRIESPQTLEPVQKIEEIDEIEISEIDTDDELPIYEEELIPEIELIENPEVDTEVDTINSENYNSDVVINNSAKIGSLPEPTKELDRTTGLENEVKIPMDYVEVKNMESEIAKINENTRLHELPEDTLSTMLIFKWLEFLISRVGTNNLVDVLDYYYTLKWISGKSVNKLLKISKNMKYFHEDMEWKASKSMTPEDHVVSLLYIEKLAGRPISMDELEEMEREITRIKKWANELQTL</sequence>
<organism>
    <name type="scientific">Methanococcus voltae</name>
    <dbReference type="NCBI Taxonomy" id="2188"/>
    <lineage>
        <taxon>Archaea</taxon>
        <taxon>Methanobacteriati</taxon>
        <taxon>Methanobacteriota</taxon>
        <taxon>Methanomada group</taxon>
        <taxon>Methanococci</taxon>
        <taxon>Methanococcales</taxon>
        <taxon>Methanococcaceae</taxon>
        <taxon>Methanococcus</taxon>
    </lineage>
</organism>
<feature type="chain" id="PRO_0000087270" description="Putative flagella-related protein D">
    <location>
        <begin position="1"/>
        <end position="362"/>
    </location>
</feature>
<evidence type="ECO:0000305" key="1"/>
<proteinExistence type="predicted"/>
<keyword id="KW-0974">Archaeal flagellum</keyword>
<protein>
    <recommendedName>
        <fullName>Putative flagella-related protein D</fullName>
    </recommendedName>
</protein>
<dbReference type="EMBL" id="U97040">
    <property type="protein sequence ID" value="AAB57828.2"/>
    <property type="molecule type" value="Genomic_DNA"/>
</dbReference>
<dbReference type="PIR" id="T44949">
    <property type="entry name" value="T44949"/>
</dbReference>
<dbReference type="SMR" id="O06637"/>
<dbReference type="GO" id="GO:0097589">
    <property type="term" value="C:archaeal-type flagellum"/>
    <property type="evidence" value="ECO:0007669"/>
    <property type="project" value="UniProtKB-SubCell"/>
</dbReference>
<dbReference type="GO" id="GO:0097588">
    <property type="term" value="P:archaeal or bacterial-type flagellum-dependent cell motility"/>
    <property type="evidence" value="ECO:0007669"/>
    <property type="project" value="InterPro"/>
</dbReference>
<dbReference type="InterPro" id="IPR006752">
    <property type="entry name" value="Arch_fla_DE"/>
</dbReference>
<dbReference type="InterPro" id="IPR016682">
    <property type="entry name" value="FlaD_prd_arc"/>
</dbReference>
<dbReference type="InterPro" id="IPR052494">
    <property type="entry name" value="Flagella_assembly_related"/>
</dbReference>
<dbReference type="PANTHER" id="PTHR40698:SF1">
    <property type="entry name" value="FLAGELLA-RELATED PROTEIN D-RELATED"/>
    <property type="match status" value="1"/>
</dbReference>
<dbReference type="PANTHER" id="PTHR40698">
    <property type="entry name" value="FLAGELLA-RELATED PROTEIN E-RELATED-RELATED"/>
    <property type="match status" value="1"/>
</dbReference>
<dbReference type="Pfam" id="PF04659">
    <property type="entry name" value="Arch_fla_DE"/>
    <property type="match status" value="1"/>
</dbReference>
<dbReference type="PIRSF" id="PIRSF017066">
    <property type="entry name" value="FlaD_arch_prd"/>
    <property type="match status" value="1"/>
</dbReference>
<name>FLAD_METVO</name>